<gene>
    <name evidence="2" type="primary">tuf</name>
    <name type="ordered locus">HDEF_0718</name>
</gene>
<dbReference type="EC" id="3.6.5.3" evidence="2"/>
<dbReference type="EMBL" id="CP001277">
    <property type="protein sequence ID" value="ACQ67451.1"/>
    <property type="molecule type" value="Genomic_DNA"/>
</dbReference>
<dbReference type="RefSeq" id="WP_015873272.1">
    <property type="nucleotide sequence ID" value="NC_012751.1"/>
</dbReference>
<dbReference type="SMR" id="C4K4F8"/>
<dbReference type="STRING" id="572265.HDEF_0718"/>
<dbReference type="GeneID" id="66260571"/>
<dbReference type="KEGG" id="hde:HDEF_0718"/>
<dbReference type="eggNOG" id="COG0050">
    <property type="taxonomic scope" value="Bacteria"/>
</dbReference>
<dbReference type="HOGENOM" id="CLU_007265_0_0_6"/>
<dbReference type="Proteomes" id="UP000002334">
    <property type="component" value="Chromosome"/>
</dbReference>
<dbReference type="GO" id="GO:0005829">
    <property type="term" value="C:cytosol"/>
    <property type="evidence" value="ECO:0007669"/>
    <property type="project" value="TreeGrafter"/>
</dbReference>
<dbReference type="GO" id="GO:0005525">
    <property type="term" value="F:GTP binding"/>
    <property type="evidence" value="ECO:0007669"/>
    <property type="project" value="UniProtKB-UniRule"/>
</dbReference>
<dbReference type="GO" id="GO:0003924">
    <property type="term" value="F:GTPase activity"/>
    <property type="evidence" value="ECO:0007669"/>
    <property type="project" value="InterPro"/>
</dbReference>
<dbReference type="GO" id="GO:0097216">
    <property type="term" value="F:guanosine tetraphosphate binding"/>
    <property type="evidence" value="ECO:0007669"/>
    <property type="project" value="UniProtKB-ARBA"/>
</dbReference>
<dbReference type="GO" id="GO:0003746">
    <property type="term" value="F:translation elongation factor activity"/>
    <property type="evidence" value="ECO:0007669"/>
    <property type="project" value="UniProtKB-UniRule"/>
</dbReference>
<dbReference type="CDD" id="cd01884">
    <property type="entry name" value="EF_Tu"/>
    <property type="match status" value="1"/>
</dbReference>
<dbReference type="CDD" id="cd03697">
    <property type="entry name" value="EFTU_II"/>
    <property type="match status" value="1"/>
</dbReference>
<dbReference type="CDD" id="cd03707">
    <property type="entry name" value="EFTU_III"/>
    <property type="match status" value="1"/>
</dbReference>
<dbReference type="FunFam" id="2.40.30.10:FF:000001">
    <property type="entry name" value="Elongation factor Tu"/>
    <property type="match status" value="1"/>
</dbReference>
<dbReference type="FunFam" id="3.40.50.300:FF:000003">
    <property type="entry name" value="Elongation factor Tu"/>
    <property type="match status" value="1"/>
</dbReference>
<dbReference type="Gene3D" id="3.40.50.300">
    <property type="entry name" value="P-loop containing nucleotide triphosphate hydrolases"/>
    <property type="match status" value="1"/>
</dbReference>
<dbReference type="Gene3D" id="2.40.30.10">
    <property type="entry name" value="Translation factors"/>
    <property type="match status" value="2"/>
</dbReference>
<dbReference type="HAMAP" id="MF_00118_B">
    <property type="entry name" value="EF_Tu_B"/>
    <property type="match status" value="1"/>
</dbReference>
<dbReference type="InterPro" id="IPR041709">
    <property type="entry name" value="EF-Tu_GTP-bd"/>
</dbReference>
<dbReference type="InterPro" id="IPR050055">
    <property type="entry name" value="EF-Tu_GTPase"/>
</dbReference>
<dbReference type="InterPro" id="IPR004161">
    <property type="entry name" value="EFTu-like_2"/>
</dbReference>
<dbReference type="InterPro" id="IPR033720">
    <property type="entry name" value="EFTU_2"/>
</dbReference>
<dbReference type="InterPro" id="IPR031157">
    <property type="entry name" value="G_TR_CS"/>
</dbReference>
<dbReference type="InterPro" id="IPR027417">
    <property type="entry name" value="P-loop_NTPase"/>
</dbReference>
<dbReference type="InterPro" id="IPR005225">
    <property type="entry name" value="Small_GTP-bd"/>
</dbReference>
<dbReference type="InterPro" id="IPR000795">
    <property type="entry name" value="T_Tr_GTP-bd_dom"/>
</dbReference>
<dbReference type="InterPro" id="IPR009000">
    <property type="entry name" value="Transl_B-barrel_sf"/>
</dbReference>
<dbReference type="InterPro" id="IPR009001">
    <property type="entry name" value="Transl_elong_EF1A/Init_IF2_C"/>
</dbReference>
<dbReference type="InterPro" id="IPR004541">
    <property type="entry name" value="Transl_elong_EFTu/EF1A_bac/org"/>
</dbReference>
<dbReference type="InterPro" id="IPR004160">
    <property type="entry name" value="Transl_elong_EFTu/EF1A_C"/>
</dbReference>
<dbReference type="NCBIfam" id="TIGR00485">
    <property type="entry name" value="EF-Tu"/>
    <property type="match status" value="1"/>
</dbReference>
<dbReference type="NCBIfam" id="NF000766">
    <property type="entry name" value="PRK00049.1"/>
    <property type="match status" value="1"/>
</dbReference>
<dbReference type="NCBIfam" id="NF009372">
    <property type="entry name" value="PRK12735.1"/>
    <property type="match status" value="1"/>
</dbReference>
<dbReference type="NCBIfam" id="NF009373">
    <property type="entry name" value="PRK12736.1"/>
    <property type="match status" value="1"/>
</dbReference>
<dbReference type="NCBIfam" id="TIGR00231">
    <property type="entry name" value="small_GTP"/>
    <property type="match status" value="1"/>
</dbReference>
<dbReference type="PANTHER" id="PTHR43721:SF22">
    <property type="entry name" value="ELONGATION FACTOR TU, MITOCHONDRIAL"/>
    <property type="match status" value="1"/>
</dbReference>
<dbReference type="PANTHER" id="PTHR43721">
    <property type="entry name" value="ELONGATION FACTOR TU-RELATED"/>
    <property type="match status" value="1"/>
</dbReference>
<dbReference type="Pfam" id="PF00009">
    <property type="entry name" value="GTP_EFTU"/>
    <property type="match status" value="1"/>
</dbReference>
<dbReference type="Pfam" id="PF03144">
    <property type="entry name" value="GTP_EFTU_D2"/>
    <property type="match status" value="1"/>
</dbReference>
<dbReference type="Pfam" id="PF03143">
    <property type="entry name" value="GTP_EFTU_D3"/>
    <property type="match status" value="1"/>
</dbReference>
<dbReference type="PRINTS" id="PR00315">
    <property type="entry name" value="ELONGATNFCT"/>
</dbReference>
<dbReference type="SUPFAM" id="SSF50465">
    <property type="entry name" value="EF-Tu/eEF-1alpha/eIF2-gamma C-terminal domain"/>
    <property type="match status" value="1"/>
</dbReference>
<dbReference type="SUPFAM" id="SSF52540">
    <property type="entry name" value="P-loop containing nucleoside triphosphate hydrolases"/>
    <property type="match status" value="1"/>
</dbReference>
<dbReference type="SUPFAM" id="SSF50447">
    <property type="entry name" value="Translation proteins"/>
    <property type="match status" value="1"/>
</dbReference>
<dbReference type="PROSITE" id="PS00301">
    <property type="entry name" value="G_TR_1"/>
    <property type="match status" value="1"/>
</dbReference>
<dbReference type="PROSITE" id="PS51722">
    <property type="entry name" value="G_TR_2"/>
    <property type="match status" value="1"/>
</dbReference>
<sequence length="394" mass="43487">MSKEKFERKKPHINVGTIGHVDHGKTTLTAAITTVLSKKYGGQARAFDQIDNAPEEKARGITINTSHVEYETPTRHYAHVDCPGHADYVKNMITGAAQMDGAILVVAATDGPMPQTREHILLARQVGVPYILVFLNKCDMVDDAELLELVEMEVRELLSQYDFPGDDTPIIQGSALKALEGDEAYQEKIVELANALDKYIPEPQRDIDKPFLLPIEDVFSISGRGTVVTGRVERGMIKTSDSVEIVGIKDTVTTTCTGIEMFRKLLDEGRAGENVGVLLRGIKREEIERGQVLAKPGSINPHTKFEAEVYILTKEEGGRHTPFFKGYRPQFYFRTTDVTGTIELPEGVEMVMPGDNIKMLVTLIHPIAMDDGLRFAIREGGRTVGAGVVAKVIK</sequence>
<feature type="chain" id="PRO_1000203013" description="Elongation factor Tu">
    <location>
        <begin position="1"/>
        <end position="394"/>
    </location>
</feature>
<feature type="domain" description="tr-type G">
    <location>
        <begin position="10"/>
        <end position="204"/>
    </location>
</feature>
<feature type="region of interest" description="G1" evidence="1">
    <location>
        <begin position="19"/>
        <end position="26"/>
    </location>
</feature>
<feature type="region of interest" description="G2" evidence="1">
    <location>
        <begin position="60"/>
        <end position="64"/>
    </location>
</feature>
<feature type="region of interest" description="G3" evidence="1">
    <location>
        <begin position="81"/>
        <end position="84"/>
    </location>
</feature>
<feature type="region of interest" description="G4" evidence="1">
    <location>
        <begin position="136"/>
        <end position="139"/>
    </location>
</feature>
<feature type="region of interest" description="G5" evidence="1">
    <location>
        <begin position="174"/>
        <end position="176"/>
    </location>
</feature>
<feature type="binding site" evidence="2">
    <location>
        <begin position="19"/>
        <end position="26"/>
    </location>
    <ligand>
        <name>GTP</name>
        <dbReference type="ChEBI" id="CHEBI:37565"/>
    </ligand>
</feature>
<feature type="binding site" evidence="2">
    <location>
        <position position="26"/>
    </location>
    <ligand>
        <name>Mg(2+)</name>
        <dbReference type="ChEBI" id="CHEBI:18420"/>
    </ligand>
</feature>
<feature type="binding site" evidence="2">
    <location>
        <begin position="81"/>
        <end position="85"/>
    </location>
    <ligand>
        <name>GTP</name>
        <dbReference type="ChEBI" id="CHEBI:37565"/>
    </ligand>
</feature>
<feature type="binding site" evidence="2">
    <location>
        <begin position="136"/>
        <end position="139"/>
    </location>
    <ligand>
        <name>GTP</name>
        <dbReference type="ChEBI" id="CHEBI:37565"/>
    </ligand>
</feature>
<accession>C4K4F8</accession>
<evidence type="ECO:0000250" key="1"/>
<evidence type="ECO:0000255" key="2">
    <source>
        <dbReference type="HAMAP-Rule" id="MF_00118"/>
    </source>
</evidence>
<comment type="function">
    <text evidence="2">GTP hydrolase that promotes the GTP-dependent binding of aminoacyl-tRNA to the A-site of ribosomes during protein biosynthesis.</text>
</comment>
<comment type="catalytic activity">
    <reaction evidence="2">
        <text>GTP + H2O = GDP + phosphate + H(+)</text>
        <dbReference type="Rhea" id="RHEA:19669"/>
        <dbReference type="ChEBI" id="CHEBI:15377"/>
        <dbReference type="ChEBI" id="CHEBI:15378"/>
        <dbReference type="ChEBI" id="CHEBI:37565"/>
        <dbReference type="ChEBI" id="CHEBI:43474"/>
        <dbReference type="ChEBI" id="CHEBI:58189"/>
        <dbReference type="EC" id="3.6.5.3"/>
    </reaction>
    <physiologicalReaction direction="left-to-right" evidence="2">
        <dbReference type="Rhea" id="RHEA:19670"/>
    </physiologicalReaction>
</comment>
<comment type="subunit">
    <text evidence="2">Monomer.</text>
</comment>
<comment type="subcellular location">
    <subcellularLocation>
        <location evidence="2">Cytoplasm</location>
    </subcellularLocation>
</comment>
<comment type="similarity">
    <text evidence="2">Belongs to the TRAFAC class translation factor GTPase superfamily. Classic translation factor GTPase family. EF-Tu/EF-1A subfamily.</text>
</comment>
<proteinExistence type="inferred from homology"/>
<name>EFTU_HAMD5</name>
<keyword id="KW-0963">Cytoplasm</keyword>
<keyword id="KW-0251">Elongation factor</keyword>
<keyword id="KW-0342">GTP-binding</keyword>
<keyword id="KW-0378">Hydrolase</keyword>
<keyword id="KW-0460">Magnesium</keyword>
<keyword id="KW-0479">Metal-binding</keyword>
<keyword id="KW-0547">Nucleotide-binding</keyword>
<keyword id="KW-0648">Protein biosynthesis</keyword>
<protein>
    <recommendedName>
        <fullName evidence="2">Elongation factor Tu</fullName>
        <shortName evidence="2">EF-Tu</shortName>
        <ecNumber evidence="2">3.6.5.3</ecNumber>
    </recommendedName>
</protein>
<organism>
    <name type="scientific">Hamiltonella defensa subsp. Acyrthosiphon pisum (strain 5AT)</name>
    <dbReference type="NCBI Taxonomy" id="572265"/>
    <lineage>
        <taxon>Bacteria</taxon>
        <taxon>Pseudomonadati</taxon>
        <taxon>Pseudomonadota</taxon>
        <taxon>Gammaproteobacteria</taxon>
        <taxon>Enterobacterales</taxon>
        <taxon>Enterobacteriaceae</taxon>
        <taxon>aphid secondary symbionts</taxon>
        <taxon>Candidatus Hamiltonella</taxon>
    </lineage>
</organism>
<reference key="1">
    <citation type="journal article" date="2009" name="Proc. Natl. Acad. Sci. U.S.A.">
        <title>Hamiltonella defensa, genome evolution of protective bacterial endosymbiont from pathogenic ancestors.</title>
        <authorList>
            <person name="Degnan P.H."/>
            <person name="Yu Y."/>
            <person name="Sisneros N."/>
            <person name="Wing R.A."/>
            <person name="Moran N.A."/>
        </authorList>
    </citation>
    <scope>NUCLEOTIDE SEQUENCE [LARGE SCALE GENOMIC DNA]</scope>
    <source>
        <strain>5AT</strain>
    </source>
</reference>